<gene>
    <name type="ordered locus">YDR182W-A</name>
    <name type="ORF">smORF121</name>
    <name type="ORF">SR1</name>
</gene>
<keyword id="KW-0472">Membrane</keyword>
<keyword id="KW-1185">Reference proteome</keyword>
<keyword id="KW-0812">Transmembrane</keyword>
<keyword id="KW-1133">Transmembrane helix</keyword>
<dbReference type="EMBL" id="Z46727">
    <property type="status" value="NOT_ANNOTATED_CDS"/>
    <property type="molecule type" value="Genomic_DNA"/>
</dbReference>
<dbReference type="EMBL" id="BK006938">
    <property type="protein sequence ID" value="DAA12026.1"/>
    <property type="molecule type" value="Genomic_DNA"/>
</dbReference>
<dbReference type="RefSeq" id="NP_878063.3">
    <property type="nucleotide sequence ID" value="NM_001184545.3"/>
</dbReference>
<dbReference type="BioGRID" id="36976">
    <property type="interactions" value="14"/>
</dbReference>
<dbReference type="FunCoup" id="Q3E796">
    <property type="interactions" value="6"/>
</dbReference>
<dbReference type="STRING" id="4932.YDR182W-A"/>
<dbReference type="PaxDb" id="4932-YDR182W-A"/>
<dbReference type="EnsemblFungi" id="YDR182W-A_mRNA">
    <property type="protein sequence ID" value="YDR182W-A"/>
    <property type="gene ID" value="YDR182W-A"/>
</dbReference>
<dbReference type="GeneID" id="1466434"/>
<dbReference type="KEGG" id="sce:YDR182W-A"/>
<dbReference type="AGR" id="SGD:S000028539"/>
<dbReference type="SGD" id="S000028539">
    <property type="gene designation" value="YDR182W-A"/>
</dbReference>
<dbReference type="VEuPathDB" id="FungiDB:YDR182W-A"/>
<dbReference type="eggNOG" id="KOG4821">
    <property type="taxonomic scope" value="Eukaryota"/>
</dbReference>
<dbReference type="HOGENOM" id="CLU_2813860_0_0_1"/>
<dbReference type="InParanoid" id="Q3E796"/>
<dbReference type="OrthoDB" id="188035at2759"/>
<dbReference type="BioCyc" id="YEAST:G3O-30117-MONOMER"/>
<dbReference type="BioGRID-ORCS" id="1466434">
    <property type="hits" value="0 hits in 10 CRISPR screens"/>
</dbReference>
<dbReference type="PRO" id="PR:Q3E796"/>
<dbReference type="Proteomes" id="UP000002311">
    <property type="component" value="Chromosome IV"/>
</dbReference>
<dbReference type="RNAct" id="Q3E796">
    <property type="molecule type" value="protein"/>
</dbReference>
<dbReference type="GO" id="GO:0016020">
    <property type="term" value="C:membrane"/>
    <property type="evidence" value="ECO:0007669"/>
    <property type="project" value="UniProtKB-SubCell"/>
</dbReference>
<dbReference type="InterPro" id="IPR016833">
    <property type="entry name" value="Put_Na-Bile_cotransptr"/>
</dbReference>
<dbReference type="Pfam" id="PF13593">
    <property type="entry name" value="SBF_like"/>
    <property type="match status" value="1"/>
</dbReference>
<evidence type="ECO:0000255" key="1"/>
<evidence type="ECO:0000305" key="2"/>
<comment type="subcellular location">
    <subcellularLocation>
        <location evidence="2">Membrane</location>
        <topology evidence="2">Single-pass membrane protein</topology>
    </subcellularLocation>
</comment>
<organism>
    <name type="scientific">Saccharomyces cerevisiae (strain ATCC 204508 / S288c)</name>
    <name type="common">Baker's yeast</name>
    <dbReference type="NCBI Taxonomy" id="559292"/>
    <lineage>
        <taxon>Eukaryota</taxon>
        <taxon>Fungi</taxon>
        <taxon>Dikarya</taxon>
        <taxon>Ascomycota</taxon>
        <taxon>Saccharomycotina</taxon>
        <taxon>Saccharomycetes</taxon>
        <taxon>Saccharomycetales</taxon>
        <taxon>Saccharomycetaceae</taxon>
        <taxon>Saccharomyces</taxon>
    </lineage>
</organism>
<accession>Q3E796</accession>
<accession>D6VSG6</accession>
<name>YD182_YEAST</name>
<reference key="1">
    <citation type="journal article" date="1997" name="Nature">
        <title>The nucleotide sequence of Saccharomyces cerevisiae chromosome IV.</title>
        <authorList>
            <person name="Jacq C."/>
            <person name="Alt-Moerbe J."/>
            <person name="Andre B."/>
            <person name="Arnold W."/>
            <person name="Bahr A."/>
            <person name="Ballesta J.P.G."/>
            <person name="Bargues M."/>
            <person name="Baron L."/>
            <person name="Becker A."/>
            <person name="Biteau N."/>
            <person name="Bloecker H."/>
            <person name="Blugeon C."/>
            <person name="Boskovic J."/>
            <person name="Brandt P."/>
            <person name="Brueckner M."/>
            <person name="Buitrago M.J."/>
            <person name="Coster F."/>
            <person name="Delaveau T."/>
            <person name="del Rey F."/>
            <person name="Dujon B."/>
            <person name="Eide L.G."/>
            <person name="Garcia-Cantalejo J.M."/>
            <person name="Goffeau A."/>
            <person name="Gomez-Peris A."/>
            <person name="Granotier C."/>
            <person name="Hanemann V."/>
            <person name="Hankeln T."/>
            <person name="Hoheisel J.D."/>
            <person name="Jaeger W."/>
            <person name="Jimenez A."/>
            <person name="Jonniaux J.-L."/>
            <person name="Kraemer C."/>
            <person name="Kuester H."/>
            <person name="Laamanen P."/>
            <person name="Legros Y."/>
            <person name="Louis E.J."/>
            <person name="Moeller-Rieker S."/>
            <person name="Monnet A."/>
            <person name="Moro M."/>
            <person name="Mueller-Auer S."/>
            <person name="Nussbaumer B."/>
            <person name="Paricio N."/>
            <person name="Paulin L."/>
            <person name="Perea J."/>
            <person name="Perez-Alonso M."/>
            <person name="Perez-Ortin J.E."/>
            <person name="Pohl T.M."/>
            <person name="Prydz H."/>
            <person name="Purnelle B."/>
            <person name="Rasmussen S.W."/>
            <person name="Remacha M.A."/>
            <person name="Revuelta J.L."/>
            <person name="Rieger M."/>
            <person name="Salom D."/>
            <person name="Saluz H.P."/>
            <person name="Saiz J.E."/>
            <person name="Saren A.-M."/>
            <person name="Schaefer M."/>
            <person name="Scharfe M."/>
            <person name="Schmidt E.R."/>
            <person name="Schneider C."/>
            <person name="Scholler P."/>
            <person name="Schwarz S."/>
            <person name="Soler-Mira A."/>
            <person name="Urrestarazu L.A."/>
            <person name="Verhasselt P."/>
            <person name="Vissers S."/>
            <person name="Voet M."/>
            <person name="Volckaert G."/>
            <person name="Wagner G."/>
            <person name="Wambutt R."/>
            <person name="Wedler E."/>
            <person name="Wedler H."/>
            <person name="Woelfl S."/>
            <person name="Harris D.E."/>
            <person name="Bowman S."/>
            <person name="Brown D."/>
            <person name="Churcher C.M."/>
            <person name="Connor R."/>
            <person name="Dedman K."/>
            <person name="Gentles S."/>
            <person name="Hamlin N."/>
            <person name="Hunt S."/>
            <person name="Jones L."/>
            <person name="McDonald S."/>
            <person name="Murphy L.D."/>
            <person name="Niblett D."/>
            <person name="Odell C."/>
            <person name="Oliver K."/>
            <person name="Rajandream M.A."/>
            <person name="Richards C."/>
            <person name="Shore L."/>
            <person name="Walsh S.V."/>
            <person name="Barrell B.G."/>
            <person name="Dietrich F.S."/>
            <person name="Mulligan J.T."/>
            <person name="Allen E."/>
            <person name="Araujo R."/>
            <person name="Aviles E."/>
            <person name="Berno A."/>
            <person name="Carpenter J."/>
            <person name="Chen E."/>
            <person name="Cherry J.M."/>
            <person name="Chung E."/>
            <person name="Duncan M."/>
            <person name="Hunicke-Smith S."/>
            <person name="Hyman R.W."/>
            <person name="Komp C."/>
            <person name="Lashkari D."/>
            <person name="Lew H."/>
            <person name="Lin D."/>
            <person name="Mosedale D."/>
            <person name="Nakahara K."/>
            <person name="Namath A."/>
            <person name="Oefner P."/>
            <person name="Oh C."/>
            <person name="Petel F.X."/>
            <person name="Roberts D."/>
            <person name="Schramm S."/>
            <person name="Schroeder M."/>
            <person name="Shogren T."/>
            <person name="Shroff N."/>
            <person name="Winant A."/>
            <person name="Yelton M.A."/>
            <person name="Botstein D."/>
            <person name="Davis R.W."/>
            <person name="Johnston M."/>
            <person name="Andrews S."/>
            <person name="Brinkman R."/>
            <person name="Cooper J."/>
            <person name="Ding H."/>
            <person name="Du Z."/>
            <person name="Favello A."/>
            <person name="Fulton L."/>
            <person name="Gattung S."/>
            <person name="Greco T."/>
            <person name="Hallsworth K."/>
            <person name="Hawkins J."/>
            <person name="Hillier L.W."/>
            <person name="Jier M."/>
            <person name="Johnson D."/>
            <person name="Johnston L."/>
            <person name="Kirsten J."/>
            <person name="Kucaba T."/>
            <person name="Langston Y."/>
            <person name="Latreille P."/>
            <person name="Le T."/>
            <person name="Mardis E."/>
            <person name="Menezes S."/>
            <person name="Miller N."/>
            <person name="Nhan M."/>
            <person name="Pauley A."/>
            <person name="Peluso D."/>
            <person name="Rifkin L."/>
            <person name="Riles L."/>
            <person name="Taich A."/>
            <person name="Trevaskis E."/>
            <person name="Vignati D."/>
            <person name="Wilcox L."/>
            <person name="Wohldman P."/>
            <person name="Vaudin M."/>
            <person name="Wilson R."/>
            <person name="Waterston R."/>
            <person name="Albermann K."/>
            <person name="Hani J."/>
            <person name="Heumann K."/>
            <person name="Kleine K."/>
            <person name="Mewes H.-W."/>
            <person name="Zollner A."/>
            <person name="Zaccaria P."/>
        </authorList>
    </citation>
    <scope>NUCLEOTIDE SEQUENCE [LARGE SCALE GENOMIC DNA]</scope>
    <source>
        <strain>ATCC 204508 / S288c</strain>
    </source>
</reference>
<reference key="2">
    <citation type="journal article" date="2014" name="G3 (Bethesda)">
        <title>The reference genome sequence of Saccharomyces cerevisiae: Then and now.</title>
        <authorList>
            <person name="Engel S.R."/>
            <person name="Dietrich F.S."/>
            <person name="Fisk D.G."/>
            <person name="Binkley G."/>
            <person name="Balakrishnan R."/>
            <person name="Costanzo M.C."/>
            <person name="Dwight S.S."/>
            <person name="Hitz B.C."/>
            <person name="Karra K."/>
            <person name="Nash R.S."/>
            <person name="Weng S."/>
            <person name="Wong E.D."/>
            <person name="Lloyd P."/>
            <person name="Skrzypek M.S."/>
            <person name="Miyasato S.R."/>
            <person name="Simison M."/>
            <person name="Cherry J.M."/>
        </authorList>
    </citation>
    <scope>GENOME REANNOTATION</scope>
    <source>
        <strain>ATCC 204508 / S288c</strain>
    </source>
</reference>
<reference key="3">
    <citation type="journal article" date="2003" name="Genome Res.">
        <title>Systematic discovery of new genes in the Saccharomyces cerevisiae genome.</title>
        <authorList>
            <person name="Kessler M.M."/>
            <person name="Zeng Q."/>
            <person name="Hogan S."/>
            <person name="Cook R."/>
            <person name="Morales A.J."/>
            <person name="Cottarel G."/>
        </authorList>
    </citation>
    <scope>GENOME REANNOTATION</scope>
</reference>
<protein>
    <recommendedName>
        <fullName>Uncharacterized protein YDR182W-A</fullName>
    </recommendedName>
</protein>
<sequence>MNKRYKLYRVWYYYAHQTVCITSTGFALCFVVQAKTAGLGVTPITSLYGDKKEHLGKLLVPLVLYQI</sequence>
<proteinExistence type="predicted"/>
<feature type="chain" id="PRO_0000253833" description="Uncharacterized protein YDR182W-A">
    <location>
        <begin position="1"/>
        <end position="67"/>
    </location>
</feature>
<feature type="transmembrane region" description="Helical" evidence="1">
    <location>
        <begin position="12"/>
        <end position="34"/>
    </location>
</feature>